<accession>A5ULG2</accession>
<reference key="1">
    <citation type="journal article" date="2007" name="Proc. Natl. Acad. Sci. U.S.A.">
        <title>Genomic and metabolic adaptations of Methanobrevibacter smithii to the human gut.</title>
        <authorList>
            <person name="Samuel B.S."/>
            <person name="Hansen E.E."/>
            <person name="Manchester J.K."/>
            <person name="Coutinho P.M."/>
            <person name="Henrissat B."/>
            <person name="Fulton R."/>
            <person name="Latreille P."/>
            <person name="Kim K."/>
            <person name="Wilson R.K."/>
            <person name="Gordon J.I."/>
        </authorList>
    </citation>
    <scope>NUCLEOTIDE SEQUENCE [LARGE SCALE GENOMIC DNA]</scope>
    <source>
        <strain>ATCC 35061 / DSM 861 / OCM 144 / PS</strain>
    </source>
</reference>
<comment type="catalytic activity">
    <reaction evidence="1">
        <text>shikimate + ATP = 3-phosphoshikimate + ADP + H(+)</text>
        <dbReference type="Rhea" id="RHEA:13121"/>
        <dbReference type="ChEBI" id="CHEBI:15378"/>
        <dbReference type="ChEBI" id="CHEBI:30616"/>
        <dbReference type="ChEBI" id="CHEBI:36208"/>
        <dbReference type="ChEBI" id="CHEBI:145989"/>
        <dbReference type="ChEBI" id="CHEBI:456216"/>
        <dbReference type="EC" id="2.7.1.71"/>
    </reaction>
</comment>
<comment type="pathway">
    <text evidence="1">Metabolic intermediate biosynthesis; chorismate biosynthesis; chorismate from D-erythrose 4-phosphate and phosphoenolpyruvate: step 5/7.</text>
</comment>
<comment type="subcellular location">
    <subcellularLocation>
        <location evidence="1">Cytoplasm</location>
    </subcellularLocation>
</comment>
<comment type="similarity">
    <text evidence="1">Belongs to the GHMP kinase family. Archaeal shikimate kinase subfamily.</text>
</comment>
<feature type="chain" id="PRO_1000059937" description="Shikimate kinase">
    <location>
        <begin position="1"/>
        <end position="289"/>
    </location>
</feature>
<feature type="binding site" evidence="1">
    <location>
        <begin position="84"/>
        <end position="94"/>
    </location>
    <ligand>
        <name>ATP</name>
        <dbReference type="ChEBI" id="CHEBI:30616"/>
    </ligand>
</feature>
<sequence>MKKSVRSPGSATVINAIATGFGAAFGIGLDIKCCANTQNSSITCSNDVGAPTTLMEICAKKTFEKYGISSDDFGMNFKTESELPMASGLSSSSALSNAVVSISSKIIAEEFNLMPLDDLEIINLAIDASLEAKVTITGSFDDATASYFGGVVVTDNKNRKFIIKEKMEEYPVLVYMPNFGSKSGSSDVGRMKVLSPLVETAFGLARSGDYFKALNLNGLIYANTLGFDSNIAIDALEVGAIASGLSGTGSSFVAICEDEAIDDIKETWSKYEGRVIETKVDNIGCQFIG</sequence>
<proteinExistence type="inferred from homology"/>
<dbReference type="EC" id="2.7.1.71" evidence="1"/>
<dbReference type="EMBL" id="CP000678">
    <property type="protein sequence ID" value="ABQ87040.1"/>
    <property type="molecule type" value="Genomic_DNA"/>
</dbReference>
<dbReference type="RefSeq" id="WP_004033093.1">
    <property type="nucleotide sequence ID" value="NZ_CP117965.1"/>
</dbReference>
<dbReference type="SMR" id="A5ULG2"/>
<dbReference type="STRING" id="420247.Msm_0835"/>
<dbReference type="EnsemblBacteria" id="ABQ87040">
    <property type="protein sequence ID" value="ABQ87040"/>
    <property type="gene ID" value="Msm_0835"/>
</dbReference>
<dbReference type="KEGG" id="msi:Msm_0835"/>
<dbReference type="PATRIC" id="fig|420247.28.peg.832"/>
<dbReference type="eggNOG" id="arCOG01025">
    <property type="taxonomic scope" value="Archaea"/>
</dbReference>
<dbReference type="HOGENOM" id="CLU_073768_0_0_2"/>
<dbReference type="UniPathway" id="UPA00053">
    <property type="reaction ID" value="UER00088"/>
</dbReference>
<dbReference type="Proteomes" id="UP000001992">
    <property type="component" value="Chromosome"/>
</dbReference>
<dbReference type="GO" id="GO:0005737">
    <property type="term" value="C:cytoplasm"/>
    <property type="evidence" value="ECO:0007669"/>
    <property type="project" value="UniProtKB-SubCell"/>
</dbReference>
<dbReference type="GO" id="GO:0005524">
    <property type="term" value="F:ATP binding"/>
    <property type="evidence" value="ECO:0007669"/>
    <property type="project" value="UniProtKB-UniRule"/>
</dbReference>
<dbReference type="GO" id="GO:0004765">
    <property type="term" value="F:shikimate kinase activity"/>
    <property type="evidence" value="ECO:0007669"/>
    <property type="project" value="UniProtKB-UniRule"/>
</dbReference>
<dbReference type="GO" id="GO:0008652">
    <property type="term" value="P:amino acid biosynthetic process"/>
    <property type="evidence" value="ECO:0007669"/>
    <property type="project" value="UniProtKB-KW"/>
</dbReference>
<dbReference type="GO" id="GO:0009073">
    <property type="term" value="P:aromatic amino acid family biosynthetic process"/>
    <property type="evidence" value="ECO:0007669"/>
    <property type="project" value="UniProtKB-KW"/>
</dbReference>
<dbReference type="GO" id="GO:0009423">
    <property type="term" value="P:chorismate biosynthetic process"/>
    <property type="evidence" value="ECO:0007669"/>
    <property type="project" value="UniProtKB-UniRule"/>
</dbReference>
<dbReference type="Gene3D" id="3.30.230.10">
    <property type="match status" value="1"/>
</dbReference>
<dbReference type="HAMAP" id="MF_00370">
    <property type="entry name" value="Shik_kinase_arch"/>
    <property type="match status" value="1"/>
</dbReference>
<dbReference type="InterPro" id="IPR013750">
    <property type="entry name" value="GHMP_kinase_C_dom"/>
</dbReference>
<dbReference type="InterPro" id="IPR036554">
    <property type="entry name" value="GHMP_kinase_C_sf"/>
</dbReference>
<dbReference type="InterPro" id="IPR006204">
    <property type="entry name" value="GHMP_kinase_N_dom"/>
</dbReference>
<dbReference type="InterPro" id="IPR006203">
    <property type="entry name" value="GHMP_knse_ATP-bd_CS"/>
</dbReference>
<dbReference type="InterPro" id="IPR020568">
    <property type="entry name" value="Ribosomal_Su5_D2-typ_SF"/>
</dbReference>
<dbReference type="InterPro" id="IPR014721">
    <property type="entry name" value="Ribsml_uS5_D2-typ_fold_subgr"/>
</dbReference>
<dbReference type="InterPro" id="IPR010189">
    <property type="entry name" value="SK_arc"/>
</dbReference>
<dbReference type="NCBIfam" id="TIGR01920">
    <property type="entry name" value="Shik_kin_archae"/>
    <property type="match status" value="1"/>
</dbReference>
<dbReference type="PANTHER" id="PTHR20861">
    <property type="entry name" value="HOMOSERINE/4-DIPHOSPHOCYTIDYL-2-C-METHYL-D-ERYTHRITOL KINASE"/>
    <property type="match status" value="1"/>
</dbReference>
<dbReference type="PANTHER" id="PTHR20861:SF3">
    <property type="entry name" value="SHIKIMATE KINASE"/>
    <property type="match status" value="1"/>
</dbReference>
<dbReference type="Pfam" id="PF08544">
    <property type="entry name" value="GHMP_kinases_C"/>
    <property type="match status" value="1"/>
</dbReference>
<dbReference type="Pfam" id="PF00288">
    <property type="entry name" value="GHMP_kinases_N"/>
    <property type="match status" value="1"/>
</dbReference>
<dbReference type="PIRSF" id="PIRSF005758">
    <property type="entry name" value="Shikimt_kin_arch"/>
    <property type="match status" value="1"/>
</dbReference>
<dbReference type="SUPFAM" id="SSF55060">
    <property type="entry name" value="GHMP Kinase, C-terminal domain"/>
    <property type="match status" value="1"/>
</dbReference>
<dbReference type="SUPFAM" id="SSF54211">
    <property type="entry name" value="Ribosomal protein S5 domain 2-like"/>
    <property type="match status" value="1"/>
</dbReference>
<dbReference type="PROSITE" id="PS00627">
    <property type="entry name" value="GHMP_KINASES_ATP"/>
    <property type="match status" value="1"/>
</dbReference>
<keyword id="KW-0028">Amino-acid biosynthesis</keyword>
<keyword id="KW-0057">Aromatic amino acid biosynthesis</keyword>
<keyword id="KW-0067">ATP-binding</keyword>
<keyword id="KW-0963">Cytoplasm</keyword>
<keyword id="KW-0418">Kinase</keyword>
<keyword id="KW-0547">Nucleotide-binding</keyword>
<keyword id="KW-0808">Transferase</keyword>
<name>AROK_METS3</name>
<protein>
    <recommendedName>
        <fullName evidence="1">Shikimate kinase</fullName>
        <shortName evidence="1">SK</shortName>
        <ecNumber evidence="1">2.7.1.71</ecNumber>
    </recommendedName>
</protein>
<organism>
    <name type="scientific">Methanobrevibacter smithii (strain ATCC 35061 / DSM 861 / OCM 144 / PS)</name>
    <dbReference type="NCBI Taxonomy" id="420247"/>
    <lineage>
        <taxon>Archaea</taxon>
        <taxon>Methanobacteriati</taxon>
        <taxon>Methanobacteriota</taxon>
        <taxon>Methanomada group</taxon>
        <taxon>Methanobacteria</taxon>
        <taxon>Methanobacteriales</taxon>
        <taxon>Methanobacteriaceae</taxon>
        <taxon>Methanobrevibacter</taxon>
    </lineage>
</organism>
<gene>
    <name evidence="1" type="primary">aroK</name>
    <name type="ordered locus">Msm_0835</name>
</gene>
<evidence type="ECO:0000255" key="1">
    <source>
        <dbReference type="HAMAP-Rule" id="MF_00370"/>
    </source>
</evidence>